<sequence>MSESEKIKKVSIVIPVYNEQESLPILIERTSAACKLLTQPYEIILVDDGSSDNSAELLTAAANEPESHIIAVLLNRNYGQHSAIMAGFNQVSGDLIITLDADLQNPPEEIPRLVSVAEEGYDVVGTVRAHRQDSLFRKTASRMINMMIQRATGKSMGDYGCMLRAYRRHIVEAMLHCHERSTFIPILANTFARRTTEITVHHAEREFGDSKYSLMKLINLMYDLITCLTTTPLRLLSLVGSVIALSGFTLAVLLVVLRLVFGPEWAGGGVFTLFAVLFMFIGAQFVGMGLLGEYIGRIYNDVRARPRYFIQKVVGAEQTENNQEVEK</sequence>
<dbReference type="EC" id="2.4.2.53" evidence="1"/>
<dbReference type="EMBL" id="AM286415">
    <property type="protein sequence ID" value="CAL12261.1"/>
    <property type="molecule type" value="Genomic_DNA"/>
</dbReference>
<dbReference type="RefSeq" id="WP_011816394.1">
    <property type="nucleotide sequence ID" value="NC_008800.1"/>
</dbReference>
<dbReference type="RefSeq" id="YP_001006431.1">
    <property type="nucleotide sequence ID" value="NC_008800.1"/>
</dbReference>
<dbReference type="SMR" id="A1JPP5"/>
<dbReference type="CAZy" id="GT2">
    <property type="family name" value="Glycosyltransferase Family 2"/>
</dbReference>
<dbReference type="KEGG" id="yen:YE2191"/>
<dbReference type="PATRIC" id="fig|393305.7.peg.2356"/>
<dbReference type="eggNOG" id="COG0463">
    <property type="taxonomic scope" value="Bacteria"/>
</dbReference>
<dbReference type="HOGENOM" id="CLU_033536_0_0_6"/>
<dbReference type="OrthoDB" id="9811884at2"/>
<dbReference type="UniPathway" id="UPA00030"/>
<dbReference type="UniPathway" id="UPA00036">
    <property type="reaction ID" value="UER00495"/>
</dbReference>
<dbReference type="Proteomes" id="UP000000642">
    <property type="component" value="Chromosome"/>
</dbReference>
<dbReference type="GO" id="GO:0005886">
    <property type="term" value="C:plasma membrane"/>
    <property type="evidence" value="ECO:0007669"/>
    <property type="project" value="UniProtKB-SubCell"/>
</dbReference>
<dbReference type="GO" id="GO:0016780">
    <property type="term" value="F:phosphotransferase activity, for other substituted phosphate groups"/>
    <property type="evidence" value="ECO:0007669"/>
    <property type="project" value="UniProtKB-UniRule"/>
</dbReference>
<dbReference type="GO" id="GO:0099621">
    <property type="term" value="F:undecaprenyl-phosphate 4-deoxy-4-formamido-L-arabinose transferase activity"/>
    <property type="evidence" value="ECO:0007669"/>
    <property type="project" value="UniProtKB-EC"/>
</dbReference>
<dbReference type="GO" id="GO:0036108">
    <property type="term" value="P:4-amino-4-deoxy-alpha-L-arabinopyranosyl undecaprenyl phosphate biosynthetic process"/>
    <property type="evidence" value="ECO:0007669"/>
    <property type="project" value="UniProtKB-UniRule"/>
</dbReference>
<dbReference type="GO" id="GO:0009245">
    <property type="term" value="P:lipid A biosynthetic process"/>
    <property type="evidence" value="ECO:0007669"/>
    <property type="project" value="UniProtKB-UniRule"/>
</dbReference>
<dbReference type="GO" id="GO:0009103">
    <property type="term" value="P:lipopolysaccharide biosynthetic process"/>
    <property type="evidence" value="ECO:0007669"/>
    <property type="project" value="UniProtKB-UniRule"/>
</dbReference>
<dbReference type="GO" id="GO:0046677">
    <property type="term" value="P:response to antibiotic"/>
    <property type="evidence" value="ECO:0007669"/>
    <property type="project" value="UniProtKB-KW"/>
</dbReference>
<dbReference type="CDD" id="cd04187">
    <property type="entry name" value="DPM1_like_bac"/>
    <property type="match status" value="1"/>
</dbReference>
<dbReference type="FunFam" id="3.90.550.10:FF:000019">
    <property type="entry name" value="Undecaprenyl-phosphate 4-deoxy-4-formamido-L-arabinose transferase"/>
    <property type="match status" value="1"/>
</dbReference>
<dbReference type="Gene3D" id="3.90.550.10">
    <property type="entry name" value="Spore Coat Polysaccharide Biosynthesis Protein SpsA, Chain A"/>
    <property type="match status" value="1"/>
</dbReference>
<dbReference type="HAMAP" id="MF_01164">
    <property type="entry name" value="ArnC_transfer"/>
    <property type="match status" value="1"/>
</dbReference>
<dbReference type="InterPro" id="IPR022857">
    <property type="entry name" value="ArnC_tfrase"/>
</dbReference>
<dbReference type="InterPro" id="IPR001173">
    <property type="entry name" value="Glyco_trans_2-like"/>
</dbReference>
<dbReference type="InterPro" id="IPR050256">
    <property type="entry name" value="Glycosyltransferase_2"/>
</dbReference>
<dbReference type="InterPro" id="IPR029044">
    <property type="entry name" value="Nucleotide-diphossugar_trans"/>
</dbReference>
<dbReference type="NCBIfam" id="NF007986">
    <property type="entry name" value="PRK10714.1"/>
    <property type="match status" value="1"/>
</dbReference>
<dbReference type="PANTHER" id="PTHR48090:SF3">
    <property type="entry name" value="UNDECAPRENYL-PHOSPHATE 4-DEOXY-4-FORMAMIDO-L-ARABINOSE TRANSFERASE"/>
    <property type="match status" value="1"/>
</dbReference>
<dbReference type="PANTHER" id="PTHR48090">
    <property type="entry name" value="UNDECAPRENYL-PHOSPHATE 4-DEOXY-4-FORMAMIDO-L-ARABINOSE TRANSFERASE-RELATED"/>
    <property type="match status" value="1"/>
</dbReference>
<dbReference type="Pfam" id="PF00535">
    <property type="entry name" value="Glycos_transf_2"/>
    <property type="match status" value="1"/>
</dbReference>
<dbReference type="SUPFAM" id="SSF53448">
    <property type="entry name" value="Nucleotide-diphospho-sugar transferases"/>
    <property type="match status" value="1"/>
</dbReference>
<keyword id="KW-0046">Antibiotic resistance</keyword>
<keyword id="KW-0997">Cell inner membrane</keyword>
<keyword id="KW-1003">Cell membrane</keyword>
<keyword id="KW-0328">Glycosyltransferase</keyword>
<keyword id="KW-0441">Lipid A biosynthesis</keyword>
<keyword id="KW-0444">Lipid biosynthesis</keyword>
<keyword id="KW-0443">Lipid metabolism</keyword>
<keyword id="KW-0448">Lipopolysaccharide biosynthesis</keyword>
<keyword id="KW-0472">Membrane</keyword>
<keyword id="KW-0808">Transferase</keyword>
<keyword id="KW-0812">Transmembrane</keyword>
<keyword id="KW-1133">Transmembrane helix</keyword>
<comment type="function">
    <text evidence="1">Catalyzes the transfer of 4-deoxy-4-formamido-L-arabinose from UDP to undecaprenyl phosphate. The modified arabinose is attached to lipid A and is required for resistance to polymyxin and cationic antimicrobial peptides.</text>
</comment>
<comment type="catalytic activity">
    <reaction evidence="1">
        <text>UDP-4-deoxy-4-formamido-beta-L-arabinose + di-trans,octa-cis-undecaprenyl phosphate = 4-deoxy-4-formamido-alpha-L-arabinopyranosyl di-trans,octa-cis-undecaprenyl phosphate + UDP</text>
        <dbReference type="Rhea" id="RHEA:27722"/>
        <dbReference type="ChEBI" id="CHEBI:58223"/>
        <dbReference type="ChEBI" id="CHEBI:58709"/>
        <dbReference type="ChEBI" id="CHEBI:58909"/>
        <dbReference type="ChEBI" id="CHEBI:60392"/>
        <dbReference type="EC" id="2.4.2.53"/>
    </reaction>
</comment>
<comment type="pathway">
    <text evidence="1">Glycolipid biosynthesis; 4-amino-4-deoxy-alpha-L-arabinose undecaprenyl phosphate biosynthesis; 4-amino-4-deoxy-alpha-L-arabinose undecaprenyl phosphate from UDP-4-deoxy-4-formamido-beta-L-arabinose and undecaprenyl phosphate: step 1/2.</text>
</comment>
<comment type="pathway">
    <text evidence="1">Bacterial outer membrane biogenesis; lipopolysaccharide biosynthesis.</text>
</comment>
<comment type="subcellular location">
    <subcellularLocation>
        <location evidence="1">Cell inner membrane</location>
        <topology evidence="1">Multi-pass membrane protein</topology>
    </subcellularLocation>
</comment>
<comment type="similarity">
    <text evidence="1">Belongs to the glycosyltransferase 2 family.</text>
</comment>
<proteinExistence type="inferred from homology"/>
<protein>
    <recommendedName>
        <fullName evidence="1">Undecaprenyl-phosphate 4-deoxy-4-formamido-L-arabinose transferase</fullName>
        <ecNumber evidence="1">2.4.2.53</ecNumber>
    </recommendedName>
    <alternativeName>
        <fullName evidence="1">Undecaprenyl-phosphate Ara4FN transferase</fullName>
        <shortName evidence="1">Ara4FN transferase</shortName>
    </alternativeName>
</protein>
<organism>
    <name type="scientific">Yersinia enterocolitica serotype O:8 / biotype 1B (strain NCTC 13174 / 8081)</name>
    <dbReference type="NCBI Taxonomy" id="393305"/>
    <lineage>
        <taxon>Bacteria</taxon>
        <taxon>Pseudomonadati</taxon>
        <taxon>Pseudomonadota</taxon>
        <taxon>Gammaproteobacteria</taxon>
        <taxon>Enterobacterales</taxon>
        <taxon>Yersiniaceae</taxon>
        <taxon>Yersinia</taxon>
    </lineage>
</organism>
<name>ARNC_YERE8</name>
<accession>A1JPP5</accession>
<evidence type="ECO:0000255" key="1">
    <source>
        <dbReference type="HAMAP-Rule" id="MF_01164"/>
    </source>
</evidence>
<gene>
    <name evidence="1" type="primary">arnC</name>
    <name type="ordered locus">YE2191</name>
</gene>
<feature type="chain" id="PRO_1000065661" description="Undecaprenyl-phosphate 4-deoxy-4-formamido-L-arabinose transferase">
    <location>
        <begin position="1"/>
        <end position="327"/>
    </location>
</feature>
<feature type="transmembrane region" description="Helical" evidence="1">
    <location>
        <begin position="236"/>
        <end position="256"/>
    </location>
</feature>
<feature type="transmembrane region" description="Helical" evidence="1">
    <location>
        <begin position="270"/>
        <end position="290"/>
    </location>
</feature>
<reference key="1">
    <citation type="journal article" date="2006" name="PLoS Genet.">
        <title>The complete genome sequence and comparative genome analysis of the high pathogenicity Yersinia enterocolitica strain 8081.</title>
        <authorList>
            <person name="Thomson N.R."/>
            <person name="Howard S."/>
            <person name="Wren B.W."/>
            <person name="Holden M.T.G."/>
            <person name="Crossman L."/>
            <person name="Challis G.L."/>
            <person name="Churcher C."/>
            <person name="Mungall K."/>
            <person name="Brooks K."/>
            <person name="Chillingworth T."/>
            <person name="Feltwell T."/>
            <person name="Abdellah Z."/>
            <person name="Hauser H."/>
            <person name="Jagels K."/>
            <person name="Maddison M."/>
            <person name="Moule S."/>
            <person name="Sanders M."/>
            <person name="Whitehead S."/>
            <person name="Quail M.A."/>
            <person name="Dougan G."/>
            <person name="Parkhill J."/>
            <person name="Prentice M.B."/>
        </authorList>
    </citation>
    <scope>NUCLEOTIDE SEQUENCE [LARGE SCALE GENOMIC DNA]</scope>
    <source>
        <strain>NCTC 13174 / 8081</strain>
    </source>
</reference>